<gene>
    <name type="primary">phhB</name>
    <name type="ordered locus">PSPTO_1821</name>
</gene>
<sequence>MSTLNQAHCEACSAGAPQVSEAELPELLRQIPDWNIEVRDSVMQLEKVFLFKNFKFALAFTNAVGEIAEAEGHHPGLLTEWGKVTVTWWSHSIKGLHRNDFIMAARTDEVAAKAEGRK</sequence>
<accession>Q885L1</accession>
<reference key="1">
    <citation type="journal article" date="2003" name="Proc. Natl. Acad. Sci. U.S.A.">
        <title>The complete genome sequence of the Arabidopsis and tomato pathogen Pseudomonas syringae pv. tomato DC3000.</title>
        <authorList>
            <person name="Buell C.R."/>
            <person name="Joardar V."/>
            <person name="Lindeberg M."/>
            <person name="Selengut J."/>
            <person name="Paulsen I.T."/>
            <person name="Gwinn M.L."/>
            <person name="Dodson R.J."/>
            <person name="DeBoy R.T."/>
            <person name="Durkin A.S."/>
            <person name="Kolonay J.F."/>
            <person name="Madupu R."/>
            <person name="Daugherty S.C."/>
            <person name="Brinkac L.M."/>
            <person name="Beanan M.J."/>
            <person name="Haft D.H."/>
            <person name="Nelson W.C."/>
            <person name="Davidsen T.M."/>
            <person name="Zafar N."/>
            <person name="Zhou L."/>
            <person name="Liu J."/>
            <person name="Yuan Q."/>
            <person name="Khouri H.M."/>
            <person name="Fedorova N.B."/>
            <person name="Tran B."/>
            <person name="Russell D."/>
            <person name="Berry K.J."/>
            <person name="Utterback T.R."/>
            <person name="Van Aken S.E."/>
            <person name="Feldblyum T.V."/>
            <person name="D'Ascenzo M."/>
            <person name="Deng W.-L."/>
            <person name="Ramos A.R."/>
            <person name="Alfano J.R."/>
            <person name="Cartinhour S."/>
            <person name="Chatterjee A.K."/>
            <person name="Delaney T.P."/>
            <person name="Lazarowitz S.G."/>
            <person name="Martin G.B."/>
            <person name="Schneider D.J."/>
            <person name="Tang X."/>
            <person name="Bender C.L."/>
            <person name="White O."/>
            <person name="Fraser C.M."/>
            <person name="Collmer A."/>
        </authorList>
    </citation>
    <scope>NUCLEOTIDE SEQUENCE [LARGE SCALE GENOMIC DNA]</scope>
    <source>
        <strain>ATCC BAA-871 / DC3000</strain>
    </source>
</reference>
<name>PHS_PSESM</name>
<keyword id="KW-0456">Lyase</keyword>
<keyword id="KW-1185">Reference proteome</keyword>
<keyword id="KW-0783">Tetrahydrobiopterin biosynthesis</keyword>
<proteinExistence type="inferred from homology"/>
<protein>
    <recommendedName>
        <fullName>Pterin-4-alpha-carbinolamine dehydratase</fullName>
        <shortName evidence="2">PHS</shortName>
        <ecNumber evidence="2">4.2.1.96</ecNumber>
    </recommendedName>
    <alternativeName>
        <fullName evidence="2">4-alpha-hydroxy-tetrahydropterin dehydratase</fullName>
    </alternativeName>
    <alternativeName>
        <fullName evidence="2">Pterin carbinolamine dehydratase</fullName>
        <shortName evidence="2">PCD</shortName>
    </alternativeName>
</protein>
<organism>
    <name type="scientific">Pseudomonas syringae pv. tomato (strain ATCC BAA-871 / DC3000)</name>
    <dbReference type="NCBI Taxonomy" id="223283"/>
    <lineage>
        <taxon>Bacteria</taxon>
        <taxon>Pseudomonadati</taxon>
        <taxon>Pseudomonadota</taxon>
        <taxon>Gammaproteobacteria</taxon>
        <taxon>Pseudomonadales</taxon>
        <taxon>Pseudomonadaceae</taxon>
        <taxon>Pseudomonas</taxon>
    </lineage>
</organism>
<dbReference type="EC" id="4.2.1.96" evidence="2"/>
<dbReference type="EMBL" id="AE016853">
    <property type="protein sequence ID" value="AAO55340.1"/>
    <property type="molecule type" value="Genomic_DNA"/>
</dbReference>
<dbReference type="RefSeq" id="NP_791645.1">
    <property type="nucleotide sequence ID" value="NC_004578.1"/>
</dbReference>
<dbReference type="RefSeq" id="WP_005616592.1">
    <property type="nucleotide sequence ID" value="NC_004578.1"/>
</dbReference>
<dbReference type="SMR" id="Q885L1"/>
<dbReference type="STRING" id="223283.PSPTO_1821"/>
<dbReference type="GeneID" id="1183462"/>
<dbReference type="KEGG" id="pst:PSPTO_1821"/>
<dbReference type="PATRIC" id="fig|223283.9.peg.1851"/>
<dbReference type="eggNOG" id="COG2154">
    <property type="taxonomic scope" value="Bacteria"/>
</dbReference>
<dbReference type="HOGENOM" id="CLU_081974_2_2_6"/>
<dbReference type="OrthoDB" id="5294615at2"/>
<dbReference type="PhylomeDB" id="Q885L1"/>
<dbReference type="Proteomes" id="UP000002515">
    <property type="component" value="Chromosome"/>
</dbReference>
<dbReference type="GO" id="GO:0008124">
    <property type="term" value="F:4-alpha-hydroxytetrahydrobiopterin dehydratase activity"/>
    <property type="evidence" value="ECO:0007669"/>
    <property type="project" value="UniProtKB-UniRule"/>
</dbReference>
<dbReference type="GO" id="GO:0006729">
    <property type="term" value="P:tetrahydrobiopterin biosynthetic process"/>
    <property type="evidence" value="ECO:0007669"/>
    <property type="project" value="UniProtKB-KW"/>
</dbReference>
<dbReference type="CDD" id="cd00913">
    <property type="entry name" value="PCD_DCoH_subfamily_a"/>
    <property type="match status" value="1"/>
</dbReference>
<dbReference type="Gene3D" id="3.30.1360.20">
    <property type="entry name" value="Transcriptional coactivator/pterin dehydratase"/>
    <property type="match status" value="1"/>
</dbReference>
<dbReference type="HAMAP" id="MF_00434">
    <property type="entry name" value="Pterin_4_alpha"/>
    <property type="match status" value="1"/>
</dbReference>
<dbReference type="InterPro" id="IPR036428">
    <property type="entry name" value="PCD_sf"/>
</dbReference>
<dbReference type="InterPro" id="IPR050376">
    <property type="entry name" value="Pterin-4-alpha-carb_dehyd"/>
</dbReference>
<dbReference type="InterPro" id="IPR001533">
    <property type="entry name" value="Pterin_deHydtase"/>
</dbReference>
<dbReference type="NCBIfam" id="NF002016">
    <property type="entry name" value="PRK00823.1-1"/>
    <property type="match status" value="1"/>
</dbReference>
<dbReference type="PANTHER" id="PTHR42805">
    <property type="entry name" value="PTERIN-4-ALPHA-CARBINOLAMINE DEHYDRATASE-RELATED"/>
    <property type="match status" value="1"/>
</dbReference>
<dbReference type="PANTHER" id="PTHR42805:SF1">
    <property type="entry name" value="PTERIN-4-ALPHA-CARBINOLAMINE DEHYDRATASE-RELATED"/>
    <property type="match status" value="1"/>
</dbReference>
<dbReference type="Pfam" id="PF01329">
    <property type="entry name" value="Pterin_4a"/>
    <property type="match status" value="1"/>
</dbReference>
<dbReference type="SUPFAM" id="SSF55248">
    <property type="entry name" value="PCD-like"/>
    <property type="match status" value="1"/>
</dbReference>
<comment type="function">
    <text evidence="1">Involved in tetrahydrobiopterin biosynthesis. Seems to both prevent the formation of 7-pterins and accelerate the formation of quinonoid-BH2. May also have a positive regulatory role in the expression of phhA (By similarity).</text>
</comment>
<comment type="catalytic activity">
    <reaction evidence="2">
        <text>(4aS,6R)-4a-hydroxy-L-erythro-5,6,7,8-tetrahydrobiopterin = (6R)-L-erythro-6,7-dihydrobiopterin + H2O</text>
        <dbReference type="Rhea" id="RHEA:11920"/>
        <dbReference type="ChEBI" id="CHEBI:15377"/>
        <dbReference type="ChEBI" id="CHEBI:15642"/>
        <dbReference type="ChEBI" id="CHEBI:43120"/>
        <dbReference type="EC" id="4.2.1.96"/>
    </reaction>
</comment>
<comment type="similarity">
    <text evidence="2">Belongs to the pterin-4-alpha-carbinolamine dehydratase family.</text>
</comment>
<evidence type="ECO:0000250" key="1"/>
<evidence type="ECO:0000255" key="2">
    <source>
        <dbReference type="HAMAP-Rule" id="MF_00434"/>
    </source>
</evidence>
<feature type="chain" id="PRO_0000063067" description="Pterin-4-alpha-carbinolamine dehydratase">
    <location>
        <begin position="1"/>
        <end position="118"/>
    </location>
</feature>